<sequence>MEVYLMVRIMLVGCNGKMGRIITHCSKDFNDIEIVAGVDKSSTSNLDFPVFENIHSSSVECDVVLDFSRPSSLKSLISYCTEKKLPLVLCTTGYSKEELNLIEETSKNIPIFKSANMSIGINVINSLLKDISKKLYKDFDIEIIEKHHNQKVDSPSGTALLLADTIKDNVPEKLEYIYGRSGHSKRTKNEIGIHAIRGGSIVGDHDVIFAGIGECIEIKHTAISREVFAIGALKASAFMKGKPSGMYNMDCMLNS</sequence>
<evidence type="ECO:0000255" key="1">
    <source>
        <dbReference type="HAMAP-Rule" id="MF_00102"/>
    </source>
</evidence>
<evidence type="ECO:0000305" key="2"/>
<name>DAPB_CLOTE</name>
<organism>
    <name type="scientific">Clostridium tetani (strain Massachusetts / E88)</name>
    <dbReference type="NCBI Taxonomy" id="212717"/>
    <lineage>
        <taxon>Bacteria</taxon>
        <taxon>Bacillati</taxon>
        <taxon>Bacillota</taxon>
        <taxon>Clostridia</taxon>
        <taxon>Eubacteriales</taxon>
        <taxon>Clostridiaceae</taxon>
        <taxon>Clostridium</taxon>
    </lineage>
</organism>
<proteinExistence type="inferred from homology"/>
<accession>Q891S2</accession>
<gene>
    <name evidence="1" type="primary">dapB</name>
    <name type="ordered locus">CTC_02295</name>
</gene>
<comment type="function">
    <text evidence="1">Catalyzes the conversion of 4-hydroxy-tetrahydrodipicolinate (HTPA) to tetrahydrodipicolinate.</text>
</comment>
<comment type="catalytic activity">
    <reaction evidence="1">
        <text>(S)-2,3,4,5-tetrahydrodipicolinate + NAD(+) + H2O = (2S,4S)-4-hydroxy-2,3,4,5-tetrahydrodipicolinate + NADH + H(+)</text>
        <dbReference type="Rhea" id="RHEA:35323"/>
        <dbReference type="ChEBI" id="CHEBI:15377"/>
        <dbReference type="ChEBI" id="CHEBI:15378"/>
        <dbReference type="ChEBI" id="CHEBI:16845"/>
        <dbReference type="ChEBI" id="CHEBI:57540"/>
        <dbReference type="ChEBI" id="CHEBI:57945"/>
        <dbReference type="ChEBI" id="CHEBI:67139"/>
        <dbReference type="EC" id="1.17.1.8"/>
    </reaction>
</comment>
<comment type="catalytic activity">
    <reaction evidence="1">
        <text>(S)-2,3,4,5-tetrahydrodipicolinate + NADP(+) + H2O = (2S,4S)-4-hydroxy-2,3,4,5-tetrahydrodipicolinate + NADPH + H(+)</text>
        <dbReference type="Rhea" id="RHEA:35331"/>
        <dbReference type="ChEBI" id="CHEBI:15377"/>
        <dbReference type="ChEBI" id="CHEBI:15378"/>
        <dbReference type="ChEBI" id="CHEBI:16845"/>
        <dbReference type="ChEBI" id="CHEBI:57783"/>
        <dbReference type="ChEBI" id="CHEBI:58349"/>
        <dbReference type="ChEBI" id="CHEBI:67139"/>
        <dbReference type="EC" id="1.17.1.8"/>
    </reaction>
</comment>
<comment type="pathway">
    <text evidence="1">Amino-acid biosynthesis; L-lysine biosynthesis via DAP pathway; (S)-tetrahydrodipicolinate from L-aspartate: step 4/4.</text>
</comment>
<comment type="subcellular location">
    <subcellularLocation>
        <location evidence="1">Cytoplasm</location>
    </subcellularLocation>
</comment>
<comment type="similarity">
    <text evidence="1">Belongs to the DapB family.</text>
</comment>
<comment type="caution">
    <text evidence="2">Was originally thought to be a dihydrodipicolinate reductase (DHDPR), catalyzing the conversion of dihydrodipicolinate to tetrahydrodipicolinate. However, it was shown in E.coli that the substrate of the enzymatic reaction is not dihydrodipicolinate (DHDP) but in fact (2S,4S)-4-hydroxy-2,3,4,5-tetrahydrodipicolinic acid (HTPA), the product released by the DapA-catalyzed reaction.</text>
</comment>
<feature type="chain" id="PRO_0000141433" description="4-hydroxy-tetrahydrodipicolinate reductase">
    <location>
        <begin position="1"/>
        <end position="255"/>
    </location>
</feature>
<feature type="active site" description="Proton donor/acceptor" evidence="1">
    <location>
        <position position="147"/>
    </location>
</feature>
<feature type="active site" description="Proton donor" evidence="1">
    <location>
        <position position="151"/>
    </location>
</feature>
<feature type="binding site" evidence="1">
    <location>
        <begin position="13"/>
        <end position="18"/>
    </location>
    <ligand>
        <name>NAD(+)</name>
        <dbReference type="ChEBI" id="CHEBI:57540"/>
    </ligand>
</feature>
<feature type="binding site" evidence="1">
    <location>
        <begin position="90"/>
        <end position="92"/>
    </location>
    <ligand>
        <name>NAD(+)</name>
        <dbReference type="ChEBI" id="CHEBI:57540"/>
    </ligand>
</feature>
<feature type="binding site" evidence="1">
    <location>
        <begin position="114"/>
        <end position="117"/>
    </location>
    <ligand>
        <name>NAD(+)</name>
        <dbReference type="ChEBI" id="CHEBI:57540"/>
    </ligand>
</feature>
<feature type="binding site" evidence="1">
    <location>
        <position position="148"/>
    </location>
    <ligand>
        <name>(S)-2,3,4,5-tetrahydrodipicolinate</name>
        <dbReference type="ChEBI" id="CHEBI:16845"/>
    </ligand>
</feature>
<feature type="binding site" evidence="1">
    <location>
        <begin position="157"/>
        <end position="158"/>
    </location>
    <ligand>
        <name>(S)-2,3,4,5-tetrahydrodipicolinate</name>
        <dbReference type="ChEBI" id="CHEBI:16845"/>
    </ligand>
</feature>
<reference key="1">
    <citation type="journal article" date="2003" name="Proc. Natl. Acad. Sci. U.S.A.">
        <title>The genome sequence of Clostridium tetani, the causative agent of tetanus disease.</title>
        <authorList>
            <person name="Brueggemann H."/>
            <person name="Baeumer S."/>
            <person name="Fricke W.F."/>
            <person name="Wiezer A."/>
            <person name="Liesegang H."/>
            <person name="Decker I."/>
            <person name="Herzberg C."/>
            <person name="Martinez-Arias R."/>
            <person name="Merkl R."/>
            <person name="Henne A."/>
            <person name="Gottschalk G."/>
        </authorList>
    </citation>
    <scope>NUCLEOTIDE SEQUENCE [LARGE SCALE GENOMIC DNA]</scope>
    <source>
        <strain>Massachusetts / E88</strain>
    </source>
</reference>
<protein>
    <recommendedName>
        <fullName evidence="1">4-hydroxy-tetrahydrodipicolinate reductase</fullName>
        <shortName evidence="1">HTPA reductase</shortName>
        <ecNumber evidence="1">1.17.1.8</ecNumber>
    </recommendedName>
</protein>
<dbReference type="EC" id="1.17.1.8" evidence="1"/>
<dbReference type="EMBL" id="AE015927">
    <property type="protein sequence ID" value="AAO36773.1"/>
    <property type="molecule type" value="Genomic_DNA"/>
</dbReference>
<dbReference type="SMR" id="Q891S2"/>
<dbReference type="STRING" id="212717.CTC_02295"/>
<dbReference type="KEGG" id="ctc:CTC_02295"/>
<dbReference type="HOGENOM" id="CLU_047479_2_2_9"/>
<dbReference type="UniPathway" id="UPA00034">
    <property type="reaction ID" value="UER00018"/>
</dbReference>
<dbReference type="Proteomes" id="UP000001412">
    <property type="component" value="Chromosome"/>
</dbReference>
<dbReference type="GO" id="GO:0005829">
    <property type="term" value="C:cytosol"/>
    <property type="evidence" value="ECO:0007669"/>
    <property type="project" value="TreeGrafter"/>
</dbReference>
<dbReference type="GO" id="GO:0008839">
    <property type="term" value="F:4-hydroxy-tetrahydrodipicolinate reductase"/>
    <property type="evidence" value="ECO:0007669"/>
    <property type="project" value="UniProtKB-EC"/>
</dbReference>
<dbReference type="GO" id="GO:0051287">
    <property type="term" value="F:NAD binding"/>
    <property type="evidence" value="ECO:0007669"/>
    <property type="project" value="UniProtKB-UniRule"/>
</dbReference>
<dbReference type="GO" id="GO:0050661">
    <property type="term" value="F:NADP binding"/>
    <property type="evidence" value="ECO:0007669"/>
    <property type="project" value="UniProtKB-UniRule"/>
</dbReference>
<dbReference type="GO" id="GO:0016726">
    <property type="term" value="F:oxidoreductase activity, acting on CH or CH2 groups, NAD or NADP as acceptor"/>
    <property type="evidence" value="ECO:0007669"/>
    <property type="project" value="UniProtKB-UniRule"/>
</dbReference>
<dbReference type="GO" id="GO:0019877">
    <property type="term" value="P:diaminopimelate biosynthetic process"/>
    <property type="evidence" value="ECO:0007669"/>
    <property type="project" value="UniProtKB-UniRule"/>
</dbReference>
<dbReference type="GO" id="GO:0009089">
    <property type="term" value="P:lysine biosynthetic process via diaminopimelate"/>
    <property type="evidence" value="ECO:0007669"/>
    <property type="project" value="UniProtKB-UniRule"/>
</dbReference>
<dbReference type="CDD" id="cd02274">
    <property type="entry name" value="DHDPR_N"/>
    <property type="match status" value="1"/>
</dbReference>
<dbReference type="FunFam" id="3.30.360.10:FF:000009">
    <property type="entry name" value="4-hydroxy-tetrahydrodipicolinate reductase"/>
    <property type="match status" value="1"/>
</dbReference>
<dbReference type="Gene3D" id="3.30.360.10">
    <property type="entry name" value="Dihydrodipicolinate Reductase, domain 2"/>
    <property type="match status" value="1"/>
</dbReference>
<dbReference type="Gene3D" id="3.40.50.720">
    <property type="entry name" value="NAD(P)-binding Rossmann-like Domain"/>
    <property type="match status" value="1"/>
</dbReference>
<dbReference type="HAMAP" id="MF_00102">
    <property type="entry name" value="DapB"/>
    <property type="match status" value="1"/>
</dbReference>
<dbReference type="InterPro" id="IPR022663">
    <property type="entry name" value="DapB_C"/>
</dbReference>
<dbReference type="InterPro" id="IPR000846">
    <property type="entry name" value="DapB_N"/>
</dbReference>
<dbReference type="InterPro" id="IPR022664">
    <property type="entry name" value="DapB_N_CS"/>
</dbReference>
<dbReference type="InterPro" id="IPR023940">
    <property type="entry name" value="DHDPR_bac"/>
</dbReference>
<dbReference type="InterPro" id="IPR036291">
    <property type="entry name" value="NAD(P)-bd_dom_sf"/>
</dbReference>
<dbReference type="NCBIfam" id="TIGR00036">
    <property type="entry name" value="dapB"/>
    <property type="match status" value="1"/>
</dbReference>
<dbReference type="PANTHER" id="PTHR20836:SF7">
    <property type="entry name" value="4-HYDROXY-TETRAHYDRODIPICOLINATE REDUCTASE"/>
    <property type="match status" value="1"/>
</dbReference>
<dbReference type="PANTHER" id="PTHR20836">
    <property type="entry name" value="DIHYDRODIPICOLINATE REDUCTASE"/>
    <property type="match status" value="1"/>
</dbReference>
<dbReference type="Pfam" id="PF05173">
    <property type="entry name" value="DapB_C"/>
    <property type="match status" value="1"/>
</dbReference>
<dbReference type="Pfam" id="PF01113">
    <property type="entry name" value="DapB_N"/>
    <property type="match status" value="1"/>
</dbReference>
<dbReference type="PIRSF" id="PIRSF000161">
    <property type="entry name" value="DHPR"/>
    <property type="match status" value="1"/>
</dbReference>
<dbReference type="SUPFAM" id="SSF55347">
    <property type="entry name" value="Glyceraldehyde-3-phosphate dehydrogenase-like, C-terminal domain"/>
    <property type="match status" value="1"/>
</dbReference>
<dbReference type="SUPFAM" id="SSF51735">
    <property type="entry name" value="NAD(P)-binding Rossmann-fold domains"/>
    <property type="match status" value="1"/>
</dbReference>
<dbReference type="PROSITE" id="PS01298">
    <property type="entry name" value="DAPB"/>
    <property type="match status" value="1"/>
</dbReference>
<keyword id="KW-0028">Amino-acid biosynthesis</keyword>
<keyword id="KW-0963">Cytoplasm</keyword>
<keyword id="KW-0220">Diaminopimelate biosynthesis</keyword>
<keyword id="KW-0457">Lysine biosynthesis</keyword>
<keyword id="KW-0520">NAD</keyword>
<keyword id="KW-0521">NADP</keyword>
<keyword id="KW-0560">Oxidoreductase</keyword>
<keyword id="KW-1185">Reference proteome</keyword>